<keyword id="KW-0150">Chloroplast</keyword>
<keyword id="KW-0249">Electron transport</keyword>
<keyword id="KW-0472">Membrane</keyword>
<keyword id="KW-0602">Photosynthesis</keyword>
<keyword id="KW-0934">Plastid</keyword>
<keyword id="KW-0793">Thylakoid</keyword>
<keyword id="KW-0812">Transmembrane</keyword>
<keyword id="KW-1133">Transmembrane helix</keyword>
<keyword id="KW-0813">Transport</keyword>
<protein>
    <recommendedName>
        <fullName evidence="1">Cytochrome b6-f complex subunit 6</fullName>
    </recommendedName>
    <alternativeName>
        <fullName evidence="1">Cytochrome b6-f complex subunit PetL</fullName>
    </alternativeName>
    <alternativeName>
        <fullName evidence="1">Cytochrome b6-f complex subunit VI</fullName>
    </alternativeName>
</protein>
<name>PETL_NYMAL</name>
<sequence>MPTIVSYFGFLLTASTITPALFIGLSKIRLI</sequence>
<evidence type="ECO:0000255" key="1">
    <source>
        <dbReference type="HAMAP-Rule" id="MF_00433"/>
    </source>
</evidence>
<dbReference type="EMBL" id="AJ627251">
    <property type="protein sequence ID" value="CAF28611.1"/>
    <property type="molecule type" value="Genomic_DNA"/>
</dbReference>
<dbReference type="RefSeq" id="YP_053173.1">
    <property type="nucleotide sequence ID" value="NC_006050.1"/>
</dbReference>
<dbReference type="SMR" id="Q6EW35"/>
<dbReference type="GeneID" id="2896220"/>
<dbReference type="GO" id="GO:0009535">
    <property type="term" value="C:chloroplast thylakoid membrane"/>
    <property type="evidence" value="ECO:0007669"/>
    <property type="project" value="UniProtKB-SubCell"/>
</dbReference>
<dbReference type="GO" id="GO:0009512">
    <property type="term" value="C:cytochrome b6f complex"/>
    <property type="evidence" value="ECO:0007669"/>
    <property type="project" value="InterPro"/>
</dbReference>
<dbReference type="GO" id="GO:0045158">
    <property type="term" value="F:electron transporter, transferring electrons within cytochrome b6/f complex of photosystem II activity"/>
    <property type="evidence" value="ECO:0007669"/>
    <property type="project" value="UniProtKB-UniRule"/>
</dbReference>
<dbReference type="GO" id="GO:0015979">
    <property type="term" value="P:photosynthesis"/>
    <property type="evidence" value="ECO:0007669"/>
    <property type="project" value="UniProtKB-KW"/>
</dbReference>
<dbReference type="HAMAP" id="MF_00433">
    <property type="entry name" value="Cytb6_f_PetL"/>
    <property type="match status" value="1"/>
</dbReference>
<dbReference type="InterPro" id="IPR007802">
    <property type="entry name" value="Cyt_b6/f_cplx_su6"/>
</dbReference>
<dbReference type="PANTHER" id="PTHR37266">
    <property type="entry name" value="CYTOCHROME B6-F COMPLEX SUBUNIT 6"/>
    <property type="match status" value="1"/>
</dbReference>
<dbReference type="PANTHER" id="PTHR37266:SF1">
    <property type="entry name" value="CYTOCHROME B6-F COMPLEX SUBUNIT 6"/>
    <property type="match status" value="1"/>
</dbReference>
<dbReference type="Pfam" id="PF05115">
    <property type="entry name" value="PetL"/>
    <property type="match status" value="1"/>
</dbReference>
<proteinExistence type="inferred from homology"/>
<accession>Q6EW35</accession>
<reference key="1">
    <citation type="journal article" date="2004" name="Mol. Biol. Evol.">
        <title>The chloroplast genome of Nymphaea alba: whole-genome analyses and the problem of identifying the most basal angiosperm.</title>
        <authorList>
            <person name="Goremykin V.V."/>
            <person name="Hirsch-Ernst K.I."/>
            <person name="Woelfl S."/>
            <person name="Hellwig F.H."/>
        </authorList>
    </citation>
    <scope>NUCLEOTIDE SEQUENCE [LARGE SCALE GENOMIC DNA]</scope>
</reference>
<comment type="function">
    <text evidence="1">Component of the cytochrome b6-f complex, which mediates electron transfer between photosystem II (PSII) and photosystem I (PSI), cyclic electron flow around PSI, and state transitions. PetL is important for photoautotrophic growth as well as for electron transfer efficiency and stability of the cytochrome b6-f complex.</text>
</comment>
<comment type="subunit">
    <text evidence="1">The 4 large subunits of the cytochrome b6-f complex are cytochrome b6, subunit IV (17 kDa polypeptide, PetD), cytochrome f and the Rieske protein, while the 4 small subunits are PetG, PetL, PetM and PetN. The complex functions as a dimer.</text>
</comment>
<comment type="subcellular location">
    <subcellularLocation>
        <location evidence="1">Plastid</location>
        <location evidence="1">Chloroplast thylakoid membrane</location>
        <topology evidence="1">Single-pass membrane protein</topology>
    </subcellularLocation>
</comment>
<comment type="similarity">
    <text evidence="1">Belongs to the PetL family.</text>
</comment>
<organism>
    <name type="scientific">Nymphaea alba</name>
    <name type="common">White water-lily</name>
    <name type="synonym">Castalia alba</name>
    <dbReference type="NCBI Taxonomy" id="34301"/>
    <lineage>
        <taxon>Eukaryota</taxon>
        <taxon>Viridiplantae</taxon>
        <taxon>Streptophyta</taxon>
        <taxon>Embryophyta</taxon>
        <taxon>Tracheophyta</taxon>
        <taxon>Spermatophyta</taxon>
        <taxon>Magnoliopsida</taxon>
        <taxon>Nymphaeales</taxon>
        <taxon>Nymphaeaceae</taxon>
        <taxon>Nymphaea</taxon>
    </lineage>
</organism>
<gene>
    <name evidence="1" type="primary">petL</name>
</gene>
<feature type="chain" id="PRO_0000220460" description="Cytochrome b6-f complex subunit 6">
    <location>
        <begin position="1"/>
        <end position="31"/>
    </location>
</feature>
<feature type="transmembrane region" description="Helical" evidence="1">
    <location>
        <begin position="4"/>
        <end position="26"/>
    </location>
</feature>
<geneLocation type="chloroplast"/>